<keyword id="KW-0687">Ribonucleoprotein</keyword>
<keyword id="KW-0689">Ribosomal protein</keyword>
<keyword id="KW-0694">RNA-binding</keyword>
<keyword id="KW-0699">rRNA-binding</keyword>
<evidence type="ECO:0000255" key="1">
    <source>
        <dbReference type="HAMAP-Rule" id="MF_01320"/>
    </source>
</evidence>
<evidence type="ECO:0000256" key="2">
    <source>
        <dbReference type="SAM" id="MobiDB-lite"/>
    </source>
</evidence>
<evidence type="ECO:0000305" key="3"/>
<sequence>MAIVKVKPTSPGRRAMVKVVNKNLHQGKPFAALLDSQSSTAGRNNNGRITTRHKGGGHKQHYRIVDFRRTKDGIPAKVERLEYDPNRSANIALVLYADGERRYIIAPKGLTVGQQLMSGSEAPIRAGNTLPIRNIPVGTTIHCIEMLPGKGAQMARSAGTSAMLLAREGVYAQVRLRSGEIRRVHIECRATIGEVGNEEHSLRQIGKAGANRWRGIRPTVRGVAMNPVDHPHGGGEGKTAAGRDPVSPWGTPAKGYRTRSNKRTTTMIVQRRHKR</sequence>
<comment type="function">
    <text evidence="1">One of the primary rRNA binding proteins. Required for association of the 30S and 50S subunits to form the 70S ribosome, for tRNA binding and peptide bond formation. It has been suggested to have peptidyltransferase activity; this is somewhat controversial. Makes several contacts with the 16S rRNA in the 70S ribosome.</text>
</comment>
<comment type="subunit">
    <text evidence="1">Part of the 50S ribosomal subunit. Forms a bridge to the 30S subunit in the 70S ribosome.</text>
</comment>
<comment type="similarity">
    <text evidence="1">Belongs to the universal ribosomal protein uL2 family.</text>
</comment>
<gene>
    <name evidence="1" type="primary">rplB</name>
    <name type="ordered locus">BceJ2315_02400</name>
    <name type="ORF">BCAL0237</name>
</gene>
<organism>
    <name type="scientific">Burkholderia cenocepacia (strain ATCC BAA-245 / DSM 16553 / LMG 16656 / NCTC 13227 / J2315 / CF5610)</name>
    <name type="common">Burkholderia cepacia (strain J2315)</name>
    <dbReference type="NCBI Taxonomy" id="216591"/>
    <lineage>
        <taxon>Bacteria</taxon>
        <taxon>Pseudomonadati</taxon>
        <taxon>Pseudomonadota</taxon>
        <taxon>Betaproteobacteria</taxon>
        <taxon>Burkholderiales</taxon>
        <taxon>Burkholderiaceae</taxon>
        <taxon>Burkholderia</taxon>
        <taxon>Burkholderia cepacia complex</taxon>
    </lineage>
</organism>
<feature type="chain" id="PRO_1000141517" description="Large ribosomal subunit protein uL2">
    <location>
        <begin position="1"/>
        <end position="275"/>
    </location>
</feature>
<feature type="region of interest" description="Disordered" evidence="2">
    <location>
        <begin position="35"/>
        <end position="59"/>
    </location>
</feature>
<feature type="region of interest" description="Disordered" evidence="2">
    <location>
        <begin position="224"/>
        <end position="275"/>
    </location>
</feature>
<feature type="compositionally biased region" description="Polar residues" evidence="2">
    <location>
        <begin position="35"/>
        <end position="49"/>
    </location>
</feature>
<feature type="compositionally biased region" description="Basic residues" evidence="2">
    <location>
        <begin position="50"/>
        <end position="59"/>
    </location>
</feature>
<accession>B4E5C3</accession>
<name>RL2_BURCJ</name>
<reference key="1">
    <citation type="journal article" date="2009" name="J. Bacteriol.">
        <title>The genome of Burkholderia cenocepacia J2315, an epidemic pathogen of cystic fibrosis patients.</title>
        <authorList>
            <person name="Holden M.T."/>
            <person name="Seth-Smith H.M."/>
            <person name="Crossman L.C."/>
            <person name="Sebaihia M."/>
            <person name="Bentley S.D."/>
            <person name="Cerdeno-Tarraga A.M."/>
            <person name="Thomson N.R."/>
            <person name="Bason N."/>
            <person name="Quail M.A."/>
            <person name="Sharp S."/>
            <person name="Cherevach I."/>
            <person name="Churcher C."/>
            <person name="Goodhead I."/>
            <person name="Hauser H."/>
            <person name="Holroyd N."/>
            <person name="Mungall K."/>
            <person name="Scott P."/>
            <person name="Walker D."/>
            <person name="White B."/>
            <person name="Rose H."/>
            <person name="Iversen P."/>
            <person name="Mil-Homens D."/>
            <person name="Rocha E.P."/>
            <person name="Fialho A.M."/>
            <person name="Baldwin A."/>
            <person name="Dowson C."/>
            <person name="Barrell B.G."/>
            <person name="Govan J.R."/>
            <person name="Vandamme P."/>
            <person name="Hart C.A."/>
            <person name="Mahenthiralingam E."/>
            <person name="Parkhill J."/>
        </authorList>
    </citation>
    <scope>NUCLEOTIDE SEQUENCE [LARGE SCALE GENOMIC DNA]</scope>
    <source>
        <strain>ATCC BAA-245 / DSM 16553 / LMG 16656 / NCTC 13227 / J2315 / CF5610</strain>
    </source>
</reference>
<proteinExistence type="inferred from homology"/>
<dbReference type="EMBL" id="AM747720">
    <property type="protein sequence ID" value="CAR50548.1"/>
    <property type="molecule type" value="Genomic_DNA"/>
</dbReference>
<dbReference type="RefSeq" id="WP_006482900.1">
    <property type="nucleotide sequence ID" value="NC_011000.1"/>
</dbReference>
<dbReference type="SMR" id="B4E5C3"/>
<dbReference type="GeneID" id="93193448"/>
<dbReference type="KEGG" id="bcj:BCAL0237"/>
<dbReference type="eggNOG" id="COG0090">
    <property type="taxonomic scope" value="Bacteria"/>
</dbReference>
<dbReference type="HOGENOM" id="CLU_036235_2_1_4"/>
<dbReference type="BioCyc" id="BCEN216591:G1G1V-280-MONOMER"/>
<dbReference type="Proteomes" id="UP000001035">
    <property type="component" value="Chromosome 1"/>
</dbReference>
<dbReference type="GO" id="GO:0015934">
    <property type="term" value="C:large ribosomal subunit"/>
    <property type="evidence" value="ECO:0007669"/>
    <property type="project" value="InterPro"/>
</dbReference>
<dbReference type="GO" id="GO:0019843">
    <property type="term" value="F:rRNA binding"/>
    <property type="evidence" value="ECO:0007669"/>
    <property type="project" value="UniProtKB-UniRule"/>
</dbReference>
<dbReference type="GO" id="GO:0003735">
    <property type="term" value="F:structural constituent of ribosome"/>
    <property type="evidence" value="ECO:0007669"/>
    <property type="project" value="InterPro"/>
</dbReference>
<dbReference type="GO" id="GO:0016740">
    <property type="term" value="F:transferase activity"/>
    <property type="evidence" value="ECO:0007669"/>
    <property type="project" value="InterPro"/>
</dbReference>
<dbReference type="GO" id="GO:0002181">
    <property type="term" value="P:cytoplasmic translation"/>
    <property type="evidence" value="ECO:0007669"/>
    <property type="project" value="TreeGrafter"/>
</dbReference>
<dbReference type="FunFam" id="2.30.30.30:FF:000001">
    <property type="entry name" value="50S ribosomal protein L2"/>
    <property type="match status" value="1"/>
</dbReference>
<dbReference type="FunFam" id="2.40.50.140:FF:000003">
    <property type="entry name" value="50S ribosomal protein L2"/>
    <property type="match status" value="1"/>
</dbReference>
<dbReference type="FunFam" id="4.10.950.10:FF:000001">
    <property type="entry name" value="50S ribosomal protein L2"/>
    <property type="match status" value="1"/>
</dbReference>
<dbReference type="Gene3D" id="2.30.30.30">
    <property type="match status" value="1"/>
</dbReference>
<dbReference type="Gene3D" id="2.40.50.140">
    <property type="entry name" value="Nucleic acid-binding proteins"/>
    <property type="match status" value="1"/>
</dbReference>
<dbReference type="Gene3D" id="4.10.950.10">
    <property type="entry name" value="Ribosomal protein L2, domain 3"/>
    <property type="match status" value="1"/>
</dbReference>
<dbReference type="HAMAP" id="MF_01320_B">
    <property type="entry name" value="Ribosomal_uL2_B"/>
    <property type="match status" value="1"/>
</dbReference>
<dbReference type="InterPro" id="IPR012340">
    <property type="entry name" value="NA-bd_OB-fold"/>
</dbReference>
<dbReference type="InterPro" id="IPR014722">
    <property type="entry name" value="Rib_uL2_dom2"/>
</dbReference>
<dbReference type="InterPro" id="IPR002171">
    <property type="entry name" value="Ribosomal_uL2"/>
</dbReference>
<dbReference type="InterPro" id="IPR005880">
    <property type="entry name" value="Ribosomal_uL2_bac/org-type"/>
</dbReference>
<dbReference type="InterPro" id="IPR022669">
    <property type="entry name" value="Ribosomal_uL2_C"/>
</dbReference>
<dbReference type="InterPro" id="IPR022671">
    <property type="entry name" value="Ribosomal_uL2_CS"/>
</dbReference>
<dbReference type="InterPro" id="IPR014726">
    <property type="entry name" value="Ribosomal_uL2_dom3"/>
</dbReference>
<dbReference type="InterPro" id="IPR022666">
    <property type="entry name" value="Ribosomal_uL2_RNA-bd_dom"/>
</dbReference>
<dbReference type="InterPro" id="IPR008991">
    <property type="entry name" value="Translation_prot_SH3-like_sf"/>
</dbReference>
<dbReference type="NCBIfam" id="TIGR01171">
    <property type="entry name" value="rplB_bact"/>
    <property type="match status" value="1"/>
</dbReference>
<dbReference type="PANTHER" id="PTHR13691:SF5">
    <property type="entry name" value="LARGE RIBOSOMAL SUBUNIT PROTEIN UL2M"/>
    <property type="match status" value="1"/>
</dbReference>
<dbReference type="PANTHER" id="PTHR13691">
    <property type="entry name" value="RIBOSOMAL PROTEIN L2"/>
    <property type="match status" value="1"/>
</dbReference>
<dbReference type="Pfam" id="PF00181">
    <property type="entry name" value="Ribosomal_L2"/>
    <property type="match status" value="1"/>
</dbReference>
<dbReference type="Pfam" id="PF03947">
    <property type="entry name" value="Ribosomal_L2_C"/>
    <property type="match status" value="1"/>
</dbReference>
<dbReference type="PIRSF" id="PIRSF002158">
    <property type="entry name" value="Ribosomal_L2"/>
    <property type="match status" value="1"/>
</dbReference>
<dbReference type="SMART" id="SM01383">
    <property type="entry name" value="Ribosomal_L2"/>
    <property type="match status" value="1"/>
</dbReference>
<dbReference type="SMART" id="SM01382">
    <property type="entry name" value="Ribosomal_L2_C"/>
    <property type="match status" value="1"/>
</dbReference>
<dbReference type="SUPFAM" id="SSF50249">
    <property type="entry name" value="Nucleic acid-binding proteins"/>
    <property type="match status" value="1"/>
</dbReference>
<dbReference type="SUPFAM" id="SSF50104">
    <property type="entry name" value="Translation proteins SH3-like domain"/>
    <property type="match status" value="1"/>
</dbReference>
<dbReference type="PROSITE" id="PS00467">
    <property type="entry name" value="RIBOSOMAL_L2"/>
    <property type="match status" value="1"/>
</dbReference>
<protein>
    <recommendedName>
        <fullName evidence="1">Large ribosomal subunit protein uL2</fullName>
    </recommendedName>
    <alternativeName>
        <fullName evidence="3">50S ribosomal protein L2</fullName>
    </alternativeName>
</protein>